<comment type="function">
    <molecule>Gag-Pol polyprotein</molecule>
    <text evidence="1">Plays a role in budding and is processed by the viral protease during virion maturation outside the cell. During budding, it recruits, in a PPXY-dependent or independent manner, Nedd4-like ubiquitin ligases that conjugate ubiquitin molecules to Gag-Pol, or to Gag-Pol binding host factors. Interaction with HECT ubiquitin ligases probably links the viral protein to the host ESCRT pathway and facilitates release.</text>
</comment>
<comment type="function">
    <molecule>Matrix protein p15</molecule>
    <text evidence="1">Targets Gag and gag-pol polyproteins to the plasma membrane via a multipartite membrane binding signal, that includes its myristoylated N-terminus. Also mediates nuclear localization of the pre-integration complex.</text>
</comment>
<comment type="function">
    <molecule>RNA-binding phosphoprotein p12</molecule>
    <text evidence="3">Constituent of the pre-integration complex (PIC) which tethers the latter to mitotic chromosomes. This allows the integration of the viral genome into the host DNA.</text>
</comment>
<comment type="function">
    <molecule>Capsid protein p30</molecule>
    <text evidence="2">Forms the spherical core of the virion that encapsulates the genomic RNA-nucleocapsid complex.</text>
</comment>
<comment type="function">
    <molecule>Nucleocapsid protein p10-Pol</molecule>
    <text evidence="1 3">Involved in the packaging and encapsidation of two copies of the genome (By similarity). Binds with high affinity to conserved UCUG elements within the packaging signal, located near the 5'-end of the genome (By similarity). This binding is dependent on genome dimerization (By similarity). Acts as a nucleic acid chaperone which is involved in rearrangement of nucleic acid secondary structures during gRNA retrotranscription (By similarity).</text>
</comment>
<comment type="function">
    <molecule>Protease</molecule>
    <text evidence="1 7">The aspartyl protease mediates proteolytic cleavages of Gag and Gag-Pol polyproteins during or shortly after the release of the virion from the plasma membrane. Cleavages take place as an ordered, step-wise cascade to yield mature proteins. This process is called maturation. Displays maximal activity during the budding process just prior to particle release from the cell (Potential). Cleaves the translation initiation factor eIF4G leading to the inhibition of host cap-dependent translation (By similarity).</text>
</comment>
<comment type="function">
    <molecule>Reverse transcriptase/ribonuclease H</molecule>
    <text evidence="5">RT is a multifunctional enzyme that converts the viral dimeric RNA genome into dsDNA in the cytoplasm, shortly after virus entry into the cell. This enzyme displays a DNA polymerase activity that can copy either DNA or RNA templates, and a ribonuclease H (RNase H) activity that cleaves the RNA strand of RNA-DNA heteroduplexes in a partially processive 3' to 5' endonucleasic mode. Conversion of viral genomic RNA into dsDNA requires many steps. A tRNA binds to the primer-binding site (PBS) situated at the 5' end of the viral RNA. RT uses the 3' end of the tRNA primer to perform a short round of RNA-dependent minus-strand DNA synthesis. The reading proceeds through the U5 region and ends after the repeated (R) region which is present at both ends of viral RNA. The portion of the RNA-DNA heteroduplex is digested by the RNase H, resulting in a ssDNA product attached to the tRNA primer. This ssDNA/tRNA hybridizes with the identical R region situated at the 3' end of viral RNA. This template exchange, known as minus-strand DNA strong stop transfer, can be either intra- or intermolecular. RT uses the 3' end of this newly synthesized short ssDNA to perform the RNA-dependent minus-strand DNA synthesis of the whole template. RNase H digests the RNA template except for a polypurine tract (PPT) situated at the 5' end of the genome. It is not clear if both polymerase and RNase H activities are simultaneous. RNase H probably can proceed both in a polymerase-dependent (RNA cut into small fragments by the same RT performing DNA synthesis) and a polymerase-independent mode (cleavage of remaining RNA fragments by free RTs). Secondly, RT performs DNA-directed plus-strand DNA synthesis using the PPT that has not been removed by RNase H as primers. PPT and tRNA primers are then removed by RNase H. The 3' and 5' ssDNA PBS regions hybridize to form a circular dsDNA intermediate. Strand displacement synthesis by RT to the PBS and PPT ends produces a blunt ended, linear dsDNA copy of the viral genome that includes long terminal repeats (LTRs) at both ends.</text>
</comment>
<comment type="function">
    <molecule>Integrase</molecule>
    <text evidence="3">Catalyzes viral DNA integration into the host chromosome, by performing a series of DNA cutting and joining reactions. This enzyme activity takes place after virion entry into a cell and reverse transcription of the RNA genome in dsDNA. The first step in the integration process is 3' processing. This step requires a complex comprising the viral genome, matrix protein and integrase. This complex is called the pre-integration complex (PIC). The integrase protein removes 2 nucleotides from each 3' end of the viral DNA, leaving recessed CA OH's at the 3' ends. In the second step that requires cell division, the PIC enters cell nucleus. In the third step, termed strand transfer, the integrase protein joins the previously processed 3' ends to the 5' ends of strands of target cellular DNA at the site of integration. The last step is viral DNA integration into host chromosome.</text>
</comment>
<comment type="catalytic activity">
    <reaction evidence="8">
        <text>DNA(n) + a 2'-deoxyribonucleoside 5'-triphosphate = DNA(n+1) + diphosphate</text>
        <dbReference type="Rhea" id="RHEA:22508"/>
        <dbReference type="Rhea" id="RHEA-COMP:17339"/>
        <dbReference type="Rhea" id="RHEA-COMP:17340"/>
        <dbReference type="ChEBI" id="CHEBI:33019"/>
        <dbReference type="ChEBI" id="CHEBI:61560"/>
        <dbReference type="ChEBI" id="CHEBI:173112"/>
        <dbReference type="EC" id="2.7.7.49"/>
    </reaction>
</comment>
<comment type="catalytic activity">
    <reaction evidence="8">
        <text>DNA(n) + a 2'-deoxyribonucleoside 5'-triphosphate = DNA(n+1) + diphosphate</text>
        <dbReference type="Rhea" id="RHEA:22508"/>
        <dbReference type="Rhea" id="RHEA-COMP:17339"/>
        <dbReference type="Rhea" id="RHEA-COMP:17340"/>
        <dbReference type="ChEBI" id="CHEBI:33019"/>
        <dbReference type="ChEBI" id="CHEBI:61560"/>
        <dbReference type="ChEBI" id="CHEBI:173112"/>
        <dbReference type="EC" id="2.7.7.7"/>
    </reaction>
</comment>
<comment type="catalytic activity">
    <reaction evidence="9">
        <text>Endonucleolytic cleavage to 5'-phosphomonoester.</text>
        <dbReference type="EC" id="3.1.26.4"/>
    </reaction>
</comment>
<comment type="cofactor">
    <cofactor evidence="8">
        <name>Mg(2+)</name>
        <dbReference type="ChEBI" id="CHEBI:18420"/>
    </cofactor>
    <text evidence="8">The RT polymerase active site binds 2 magnesium ions.</text>
</comment>
<comment type="cofactor">
    <cofactor evidence="3">
        <name>Mg(2+)</name>
        <dbReference type="ChEBI" id="CHEBI:18420"/>
    </cofactor>
    <text evidence="3">Binds 1 magnesium ion for ribonuclease H (RNase H) activity.</text>
</comment>
<comment type="cofactor">
    <cofactor evidence="3">
        <name>Mg(2+)</name>
        <dbReference type="ChEBI" id="CHEBI:18420"/>
    </cofactor>
    <text evidence="3">Magnesium ions are required for integrase activity. Binds at least 1, maybe 2 magnesium ions.</text>
</comment>
<comment type="activity regulation">
    <molecule>Protease</molecule>
    <text evidence="3">Most efficiently inhibited by Amprenavir, which is able to block Gag-Pol processing in infected cells.</text>
</comment>
<comment type="subunit">
    <molecule>Capsid protein p30</molecule>
    <text evidence="3">Homohexamer; further associates as homomultimer (By similarity). The virus core is composed of a lattice formed from hexagonal rings, each containing six capsid monomers (By similarity). Interacts with mouse UBE2I and mouse PIAS4 (By similarity).</text>
</comment>
<comment type="subunit">
    <molecule>Gag-Pol polyprotein</molecule>
    <text evidence="3">Interacts (via PPXY motif) with host NEDD4 (By similarity). Interacts (via PSAP motif) with host TSG101 (By similarity). Interacts (via LYPX(n)L motif) with host PDCD6IP (By similarity).</text>
</comment>
<comment type="subunit">
    <molecule>Reverse transcriptase/ribonuclease H</molecule>
    <text evidence="3 12">The reverse transcriptase is a monomer (Potential). Interacts (via RNase domains) with host release factor ETF1; this interaction is essential for translational readthrough of amber codon between viral gag and pol genes, as well as for viral replication (By similarity).</text>
</comment>
<comment type="subunit">
    <molecule>Integrase</molecule>
    <text evidence="3">Homodimer.</text>
</comment>
<comment type="subcellular location">
    <molecule>Gag-Pol polyprotein</molecule>
    <subcellularLocation>
        <location evidence="1">Virion</location>
    </subcellularLocation>
    <subcellularLocation>
        <location evidence="1">Host cell membrane</location>
        <topology evidence="1">Lipid-anchor</topology>
    </subcellularLocation>
    <subcellularLocation>
        <location evidence="1">Host late endosome membrane</location>
        <topology evidence="1">Lipid-anchor</topology>
    </subcellularLocation>
    <subcellularLocation>
        <location evidence="4">Host endosome</location>
        <location evidence="4">Host multivesicular body</location>
    </subcellularLocation>
    <text evidence="3">These locations are probably linked to virus assembly sites.</text>
</comment>
<comment type="subcellular location">
    <molecule>Matrix protein p15</molecule>
    <subcellularLocation>
        <location evidence="3">Virion</location>
    </subcellularLocation>
</comment>
<comment type="subcellular location">
    <molecule>Capsid protein p30</molecule>
    <subcellularLocation>
        <location evidence="3">Virion</location>
    </subcellularLocation>
</comment>
<comment type="subcellular location">
    <molecule>Nucleocapsid protein p10-Pol</molecule>
    <subcellularLocation>
        <location evidence="3">Virion</location>
    </subcellularLocation>
</comment>
<comment type="subcellular location">
    <molecule>Protease</molecule>
    <subcellularLocation>
        <location evidence="3">Virion</location>
    </subcellularLocation>
</comment>
<comment type="subcellular location">
    <molecule>RNA-binding phosphoprotein p12</molecule>
    <subcellularLocation>
        <location evidence="3">Host cytoplasm</location>
    </subcellularLocation>
    <text evidence="3">Localizes to the host cytoplasm early in infection and binds to the mitotic chromosomes later on.</text>
</comment>
<comment type="domain">
    <molecule>Gag-Pol polyprotein</molecule>
    <text evidence="1">Late-budding domains (L domains) are short sequence motifs essential for viral particle release. They can occur individually or in close proximity within structural proteins. They interacts with sorting cellular proteins of the multivesicular body (MVB) pathway. Most of these proteins are class E vacuolar protein sorting factors belonging to ESCRT-I, ESCRT-II or ESCRT-III complexes. RNA-binding phosphoprotein p12 contains one L domain: a PPXY motif which potentially interacts with the WW domain 3 of NEDD4 E3 ubiquitin ligase. PPXY motif is essential for virus egress. Matrix protein p15 contains one L domain: a PTAP/PSAP motif, which potentially interacts with the UEV domain of TSG101. The junction between the matrix protein p15 and RNA-binding phosphoprotein p12 also contains one L domain: a LYPX(n)L motif which potentially interacts with PDCD6IP. Both PSAP and LYPX(n)L domains might play little to no role in budding and possibly drive residual virus release. contains.</text>
</comment>
<comment type="PTM">
    <molecule>Gag-Pol polyprotein</molecule>
    <text evidence="1">Ubiquitinated by ITCH. Gag can recruit the ubiquitin ligase Itch in an L domain-independent manner to facilitate virus release via a mechanism that involves Gag ubiquitination.</text>
</comment>
<comment type="PTM">
    <molecule>Gag-Pol polyprotein</molecule>
    <text evidence="3">Specific enzymatic cleavages by the viral protease yield mature proteins. The protease is released by autocatalytic cleavage. The polyprotein is cleaved during and after budding, this process is termed maturation.</text>
</comment>
<comment type="PTM">
    <molecule>Capsid protein p30</molecule>
    <text evidence="3">Sumoylated; which is required for virus replication.</text>
</comment>
<comment type="PTM">
    <molecule>RNA-binding phosphoprotein p12</molecule>
    <text evidence="3">Phosphorylated on serine residues.</text>
</comment>
<comment type="miscellaneous">
    <molecule>Gag-Pol polyprotein</molecule>
    <text evidence="3">This protein is translated as a gag-pol fusion protein by episodic readthrough of the gag protein termination codon. Readthrough of the terminator codon TAG occurs between the codons for 537-Asp and 539-Gly.</text>
</comment>
<comment type="miscellaneous">
    <molecule>Nucleocapsid protein p10-Pol</molecule>
    <text evidence="3">Nucleocapsid protein p10-Pol released from Pol polyprotein (NC-pol) is a few amino acids shorter than the nucleocapsid protein p10 released from Gag polyprotein (NC-gag).</text>
</comment>
<comment type="miscellaneous">
    <molecule>Reverse transcriptase/ribonuclease H</molecule>
    <text evidence="8">The reverse transcriptase is an error-prone enzyme that lacks a proof-reading function. High mutations rate is a direct consequence of this characteristic. RT also displays frequent template switching leading to high recombination rate. Recombination mostly occurs between homologous regions of the two copackaged RNA genomes. If these two RNA molecules derive from different viral strains, reverse transcription will give rise to highly recombinated proviral DNAs.</text>
</comment>
<comment type="similarity">
    <text evidence="12">Belongs to the retroviral Pol polyprotein family.</text>
</comment>
<reference key="1">
    <citation type="journal article" date="1987" name="Virology">
        <title>Nucleotide sequence of a radiation leukemia virus genome.</title>
        <authorList>
            <person name="Merregaert J."/>
            <person name="Janowski M."/>
            <person name="Reddy E.P."/>
        </authorList>
    </citation>
    <scope>NUCLEOTIDE SEQUENCE [GENOMIC RNA]</scope>
</reference>
<keyword id="KW-0064">Aspartyl protease</keyword>
<keyword id="KW-0167">Capsid protein</keyword>
<keyword id="KW-0175">Coiled coil</keyword>
<keyword id="KW-0229">DNA integration</keyword>
<keyword id="KW-0233">DNA recombination</keyword>
<keyword id="KW-0238">DNA-binding</keyword>
<keyword id="KW-0239">DNA-directed DNA polymerase</keyword>
<keyword id="KW-0255">Endonuclease</keyword>
<keyword id="KW-1262">Eukaryotic host gene expression shutoff by virus</keyword>
<keyword id="KW-1193">Eukaryotic host translation shutoff by virus</keyword>
<keyword id="KW-1032">Host cell membrane</keyword>
<keyword id="KW-1035">Host cytoplasm</keyword>
<keyword id="KW-1039">Host endosome</keyword>
<keyword id="KW-1190">Host gene expression shutoff by virus</keyword>
<keyword id="KW-1043">Host membrane</keyword>
<keyword id="KW-0945">Host-virus interaction</keyword>
<keyword id="KW-0378">Hydrolase</keyword>
<keyword id="KW-0449">Lipoprotein</keyword>
<keyword id="KW-0460">Magnesium</keyword>
<keyword id="KW-0472">Membrane</keyword>
<keyword id="KW-0479">Metal-binding</keyword>
<keyword id="KW-0511">Multifunctional enzyme</keyword>
<keyword id="KW-0519">Myristate</keyword>
<keyword id="KW-0540">Nuclease</keyword>
<keyword id="KW-0548">Nucleotidyltransferase</keyword>
<keyword id="KW-0597">Phosphoprotein</keyword>
<keyword id="KW-0645">Protease</keyword>
<keyword id="KW-1159">RNA suppression of termination</keyword>
<keyword id="KW-0694">RNA-binding</keyword>
<keyword id="KW-0695">RNA-directed DNA polymerase</keyword>
<keyword id="KW-0808">Transferase</keyword>
<keyword id="KW-0832">Ubl conjugation</keyword>
<keyword id="KW-1179">Viral genome integration</keyword>
<keyword id="KW-0468">Viral matrix protein</keyword>
<keyword id="KW-0543">Viral nucleoprotein</keyword>
<keyword id="KW-0946">Virion</keyword>
<keyword id="KW-1160">Virus entry into host cell</keyword>
<keyword id="KW-0862">Zinc</keyword>
<keyword id="KW-0863">Zinc-finger</keyword>
<accession>P11227</accession>
<feature type="initiator methionine" description="Removed" evidence="5">
    <location>
        <position position="1"/>
    </location>
</feature>
<feature type="chain" id="PRO_0000259739" description="Gag-Pol polyprotein">
    <location>
        <begin position="2"/>
        <end position="1734"/>
    </location>
</feature>
<feature type="chain" id="PRO_0000442903" description="Matrix protein p15">
    <location>
        <begin position="2"/>
        <end position="129"/>
    </location>
</feature>
<feature type="chain" id="PRO_0000442904" description="RNA-binding phosphoprotein p12">
    <location>
        <begin position="130"/>
        <end position="214"/>
    </location>
</feature>
<feature type="chain" id="PRO_0000442905" description="Capsid protein p30" evidence="3">
    <location>
        <begin position="215"/>
        <end position="477"/>
    </location>
</feature>
<feature type="chain" id="PRO_0000442906" description="Nucleocapsid protein p10-Pol">
    <location>
        <begin position="478"/>
        <end position="533"/>
    </location>
</feature>
<feature type="chain" id="PRO_0000026134" description="Protease">
    <location>
        <begin position="534"/>
        <end position="658"/>
    </location>
</feature>
<feature type="chain" id="PRO_0000259740" description="Reverse transcriptase/ribonuclease H">
    <location>
        <begin position="659"/>
        <end position="1329"/>
    </location>
</feature>
<feature type="chain" id="PRO_0000259741" description="Integrase">
    <location>
        <begin position="1330"/>
        <end position="1734"/>
    </location>
</feature>
<feature type="domain" description="Peptidase A2" evidence="7">
    <location>
        <begin position="560"/>
        <end position="630"/>
    </location>
</feature>
<feature type="domain" description="Reverse transcriptase" evidence="8">
    <location>
        <begin position="740"/>
        <end position="931"/>
    </location>
</feature>
<feature type="domain" description="RNase H type-1" evidence="9">
    <location>
        <begin position="1173"/>
        <end position="1319"/>
    </location>
</feature>
<feature type="domain" description="Integrase catalytic" evidence="10">
    <location>
        <begin position="1443"/>
        <end position="1601"/>
    </location>
</feature>
<feature type="zinc finger region" description="CCHC-type" evidence="6">
    <location>
        <begin position="501"/>
        <end position="518"/>
    </location>
</feature>
<feature type="zinc finger region" description="HHCC-type" evidence="3">
    <location>
        <begin position="1386"/>
        <end position="1426"/>
    </location>
</feature>
<feature type="region of interest" description="Disordered" evidence="11">
    <location>
        <begin position="112"/>
        <end position="217"/>
    </location>
</feature>
<feature type="region of interest" description="Interaction with host PIAS4" evidence="1">
    <location>
        <begin position="344"/>
        <end position="392"/>
    </location>
</feature>
<feature type="region of interest" description="Interaction with host UBE2I" evidence="1">
    <location>
        <begin position="429"/>
        <end position="434"/>
    </location>
</feature>
<feature type="region of interest" description="Disordered" evidence="11">
    <location>
        <begin position="433"/>
        <end position="498"/>
    </location>
</feature>
<feature type="region of interest" description="Disordered" evidence="11">
    <location>
        <begin position="512"/>
        <end position="551"/>
    </location>
</feature>
<feature type="coiled-coil region" evidence="5">
    <location>
        <begin position="437"/>
        <end position="477"/>
    </location>
</feature>
<feature type="short sequence motif" description="PTAP/PSAP motif" evidence="1">
    <location>
        <begin position="109"/>
        <end position="112"/>
    </location>
</feature>
<feature type="short sequence motif" description="LYPX(n)L motif" evidence="1">
    <location>
        <begin position="128"/>
        <end position="132"/>
    </location>
</feature>
<feature type="short sequence motif" description="PPXY motif" evidence="1">
    <location>
        <begin position="161"/>
        <end position="164"/>
    </location>
</feature>
<feature type="compositionally biased region" description="Basic and acidic residues" evidence="11">
    <location>
        <begin position="433"/>
        <end position="474"/>
    </location>
</feature>
<feature type="compositionally biased region" description="Basic and acidic residues" evidence="11">
    <location>
        <begin position="485"/>
        <end position="498"/>
    </location>
</feature>
<feature type="active site" description="Protease; shared with dimeric partner" evidence="7">
    <location>
        <position position="565"/>
    </location>
</feature>
<feature type="binding site" evidence="8">
    <location>
        <position position="808"/>
    </location>
    <ligand>
        <name>Mg(2+)</name>
        <dbReference type="ChEBI" id="CHEBI:18420"/>
        <label>1</label>
        <note>catalytic; for reverse transcriptase activity</note>
    </ligand>
</feature>
<feature type="binding site" evidence="8">
    <location>
        <position position="882"/>
    </location>
    <ligand>
        <name>Mg(2+)</name>
        <dbReference type="ChEBI" id="CHEBI:18420"/>
        <label>1</label>
        <note>catalytic; for reverse transcriptase activity</note>
    </ligand>
</feature>
<feature type="binding site" evidence="8">
    <location>
        <position position="883"/>
    </location>
    <ligand>
        <name>Mg(2+)</name>
        <dbReference type="ChEBI" id="CHEBI:18420"/>
        <label>1</label>
        <note>catalytic; for reverse transcriptase activity</note>
    </ligand>
</feature>
<feature type="binding site" evidence="9">
    <location>
        <position position="1182"/>
    </location>
    <ligand>
        <name>Mg(2+)</name>
        <dbReference type="ChEBI" id="CHEBI:18420"/>
        <label>2</label>
        <note>catalytic; for RNase H activity</note>
    </ligand>
</feature>
<feature type="binding site" evidence="9">
    <location>
        <position position="1220"/>
    </location>
    <ligand>
        <name>Mg(2+)</name>
        <dbReference type="ChEBI" id="CHEBI:18420"/>
        <label>2</label>
        <note>catalytic; for RNase H activity</note>
    </ligand>
</feature>
<feature type="binding site" evidence="9">
    <location>
        <position position="1241"/>
    </location>
    <ligand>
        <name>Mg(2+)</name>
        <dbReference type="ChEBI" id="CHEBI:18420"/>
        <label>2</label>
        <note>catalytic; for RNase H activity</note>
    </ligand>
</feature>
<feature type="binding site" evidence="9">
    <location>
        <position position="1311"/>
    </location>
    <ligand>
        <name>Mg(2+)</name>
        <dbReference type="ChEBI" id="CHEBI:18420"/>
        <label>2</label>
        <note>catalytic; for RNase H activity</note>
    </ligand>
</feature>
<feature type="binding site" evidence="10">
    <location>
        <position position="1454"/>
    </location>
    <ligand>
        <name>Mg(2+)</name>
        <dbReference type="ChEBI" id="CHEBI:18420"/>
        <label>3</label>
        <note>catalytic; for integrase activity</note>
    </ligand>
</feature>
<feature type="binding site" evidence="10">
    <location>
        <position position="1513"/>
    </location>
    <ligand>
        <name>Mg(2+)</name>
        <dbReference type="ChEBI" id="CHEBI:18420"/>
        <label>3</label>
        <note>catalytic; for integrase activity</note>
    </ligand>
</feature>
<feature type="site" description="Cleavage; by viral protease" evidence="3">
    <location>
        <begin position="129"/>
        <end position="130"/>
    </location>
</feature>
<feature type="site" description="Cleavage; by viral protease" evidence="3">
    <location>
        <begin position="214"/>
        <end position="215"/>
    </location>
</feature>
<feature type="site" description="Cleavage; by viral protease" evidence="3">
    <location>
        <begin position="477"/>
        <end position="478"/>
    </location>
</feature>
<feature type="site" description="Cleavage; by viral protease" evidence="3">
    <location>
        <begin position="533"/>
        <end position="534"/>
    </location>
</feature>
<feature type="site" description="Cleavage; by viral protease" evidence="3">
    <location>
        <begin position="658"/>
        <end position="659"/>
    </location>
</feature>
<feature type="site" description="Cleavage; by viral protease" evidence="3">
    <location>
        <begin position="1329"/>
        <end position="1330"/>
    </location>
</feature>
<feature type="modified residue" description="Phosphoserine; by host" evidence="3">
    <location>
        <position position="191"/>
    </location>
</feature>
<feature type="lipid moiety-binding region" description="N-myristoyl glycine; by host" evidence="5">
    <location>
        <position position="2"/>
    </location>
</feature>
<dbReference type="EC" id="3.4.23.-" evidence="7"/>
<dbReference type="EC" id="2.7.7.49" evidence="8"/>
<dbReference type="EC" id="2.7.7.7" evidence="8"/>
<dbReference type="EC" id="3.1.26.4" evidence="9"/>
<dbReference type="EC" id="2.7.7.-" evidence="3"/>
<dbReference type="EC" id="3.1.-.-" evidence="3"/>
<dbReference type="EMBL" id="K03363">
    <property type="status" value="NOT_ANNOTATED_CDS"/>
    <property type="molecule type" value="Genomic_RNA"/>
</dbReference>
<dbReference type="PIR" id="B26183">
    <property type="entry name" value="GNMVRV"/>
</dbReference>
<dbReference type="SMR" id="P11227"/>
<dbReference type="Proteomes" id="UP000007778">
    <property type="component" value="Genome"/>
</dbReference>
<dbReference type="GO" id="GO:0044185">
    <property type="term" value="C:host cell late endosome membrane"/>
    <property type="evidence" value="ECO:0007669"/>
    <property type="project" value="UniProtKB-SubCell"/>
</dbReference>
<dbReference type="GO" id="GO:0020002">
    <property type="term" value="C:host cell plasma membrane"/>
    <property type="evidence" value="ECO:0007669"/>
    <property type="project" value="UniProtKB-SubCell"/>
</dbReference>
<dbReference type="GO" id="GO:0072494">
    <property type="term" value="C:host multivesicular body"/>
    <property type="evidence" value="ECO:0007669"/>
    <property type="project" value="UniProtKB-SubCell"/>
</dbReference>
<dbReference type="GO" id="GO:0016020">
    <property type="term" value="C:membrane"/>
    <property type="evidence" value="ECO:0007669"/>
    <property type="project" value="UniProtKB-KW"/>
</dbReference>
<dbReference type="GO" id="GO:0019013">
    <property type="term" value="C:viral nucleocapsid"/>
    <property type="evidence" value="ECO:0007669"/>
    <property type="project" value="UniProtKB-KW"/>
</dbReference>
<dbReference type="GO" id="GO:0004190">
    <property type="term" value="F:aspartic-type endopeptidase activity"/>
    <property type="evidence" value="ECO:0007669"/>
    <property type="project" value="UniProtKB-KW"/>
</dbReference>
<dbReference type="GO" id="GO:0003677">
    <property type="term" value="F:DNA binding"/>
    <property type="evidence" value="ECO:0007669"/>
    <property type="project" value="UniProtKB-KW"/>
</dbReference>
<dbReference type="GO" id="GO:0003887">
    <property type="term" value="F:DNA-directed DNA polymerase activity"/>
    <property type="evidence" value="ECO:0007669"/>
    <property type="project" value="UniProtKB-KW"/>
</dbReference>
<dbReference type="GO" id="GO:0003723">
    <property type="term" value="F:RNA binding"/>
    <property type="evidence" value="ECO:0007669"/>
    <property type="project" value="UniProtKB-KW"/>
</dbReference>
<dbReference type="GO" id="GO:0003964">
    <property type="term" value="F:RNA-directed DNA polymerase activity"/>
    <property type="evidence" value="ECO:0007669"/>
    <property type="project" value="UniProtKB-KW"/>
</dbReference>
<dbReference type="GO" id="GO:0004523">
    <property type="term" value="F:RNA-DNA hybrid ribonuclease activity"/>
    <property type="evidence" value="ECO:0007669"/>
    <property type="project" value="UniProtKB-EC"/>
</dbReference>
<dbReference type="GO" id="GO:0039660">
    <property type="term" value="F:structural constituent of virion"/>
    <property type="evidence" value="ECO:0007669"/>
    <property type="project" value="UniProtKB-KW"/>
</dbReference>
<dbReference type="GO" id="GO:0008270">
    <property type="term" value="F:zinc ion binding"/>
    <property type="evidence" value="ECO:0007669"/>
    <property type="project" value="UniProtKB-KW"/>
</dbReference>
<dbReference type="GO" id="GO:0015074">
    <property type="term" value="P:DNA integration"/>
    <property type="evidence" value="ECO:0007669"/>
    <property type="project" value="UniProtKB-KW"/>
</dbReference>
<dbReference type="GO" id="GO:0006310">
    <property type="term" value="P:DNA recombination"/>
    <property type="evidence" value="ECO:0007669"/>
    <property type="project" value="UniProtKB-KW"/>
</dbReference>
<dbReference type="GO" id="GO:0075713">
    <property type="term" value="P:establishment of integrated proviral latency"/>
    <property type="evidence" value="ECO:0007669"/>
    <property type="project" value="UniProtKB-KW"/>
</dbReference>
<dbReference type="GO" id="GO:0006508">
    <property type="term" value="P:proteolysis"/>
    <property type="evidence" value="ECO:0007669"/>
    <property type="project" value="UniProtKB-KW"/>
</dbReference>
<dbReference type="GO" id="GO:0046718">
    <property type="term" value="P:symbiont entry into host cell"/>
    <property type="evidence" value="ECO:0007669"/>
    <property type="project" value="UniProtKB-KW"/>
</dbReference>
<dbReference type="GO" id="GO:0039657">
    <property type="term" value="P:symbiont-mediated suppression of host gene expression"/>
    <property type="evidence" value="ECO:0007669"/>
    <property type="project" value="UniProtKB-KW"/>
</dbReference>
<dbReference type="GO" id="GO:0044826">
    <property type="term" value="P:viral genome integration into host DNA"/>
    <property type="evidence" value="ECO:0007669"/>
    <property type="project" value="UniProtKB-KW"/>
</dbReference>
<dbReference type="GO" id="GO:0019068">
    <property type="term" value="P:virion assembly"/>
    <property type="evidence" value="ECO:0007669"/>
    <property type="project" value="InterPro"/>
</dbReference>
<dbReference type="CDD" id="cd09273">
    <property type="entry name" value="RNase_HI_RT_Bel"/>
    <property type="match status" value="1"/>
</dbReference>
<dbReference type="CDD" id="cd06095">
    <property type="entry name" value="RP_RTVL_H_like"/>
    <property type="match status" value="1"/>
</dbReference>
<dbReference type="CDD" id="cd03715">
    <property type="entry name" value="RT_ZFREV_like"/>
    <property type="match status" value="1"/>
</dbReference>
<dbReference type="FunFam" id="2.40.70.10:FF:000087">
    <property type="entry name" value="Gag-Pol polyprotein"/>
    <property type="match status" value="1"/>
</dbReference>
<dbReference type="FunFam" id="3.30.420.10:FF:000094">
    <property type="entry name" value="Gag-Pol polyprotein"/>
    <property type="match status" value="1"/>
</dbReference>
<dbReference type="FunFam" id="3.30.70.270:FF:000020">
    <property type="entry name" value="Transposon Tf2-6 polyprotein-like Protein"/>
    <property type="match status" value="1"/>
</dbReference>
<dbReference type="Gene3D" id="1.10.340.70">
    <property type="match status" value="1"/>
</dbReference>
<dbReference type="Gene3D" id="2.30.30.850">
    <property type="match status" value="1"/>
</dbReference>
<dbReference type="Gene3D" id="3.10.20.370">
    <property type="match status" value="1"/>
</dbReference>
<dbReference type="Gene3D" id="3.30.70.270">
    <property type="match status" value="2"/>
</dbReference>
<dbReference type="Gene3D" id="2.40.70.10">
    <property type="entry name" value="Acid Proteases"/>
    <property type="match status" value="1"/>
</dbReference>
<dbReference type="Gene3D" id="1.10.150.180">
    <property type="entry name" value="Gamma-retroviral matrix domain"/>
    <property type="match status" value="1"/>
</dbReference>
<dbReference type="Gene3D" id="3.10.10.10">
    <property type="entry name" value="HIV Type 1 Reverse Transcriptase, subunit A, domain 1"/>
    <property type="match status" value="1"/>
</dbReference>
<dbReference type="Gene3D" id="1.10.375.10">
    <property type="entry name" value="Human Immunodeficiency Virus Type 1 Capsid Protein"/>
    <property type="match status" value="1"/>
</dbReference>
<dbReference type="Gene3D" id="3.30.420.10">
    <property type="entry name" value="Ribonuclease H-like superfamily/Ribonuclease H"/>
    <property type="match status" value="2"/>
</dbReference>
<dbReference type="Gene3D" id="4.10.60.10">
    <property type="entry name" value="Zinc finger, CCHC-type"/>
    <property type="match status" value="1"/>
</dbReference>
<dbReference type="InterPro" id="IPR001969">
    <property type="entry name" value="Aspartic_peptidase_AS"/>
</dbReference>
<dbReference type="InterPro" id="IPR043502">
    <property type="entry name" value="DNA/RNA_pol_sf"/>
</dbReference>
<dbReference type="InterPro" id="IPR000840">
    <property type="entry name" value="G_retro_matrix"/>
</dbReference>
<dbReference type="InterPro" id="IPR036946">
    <property type="entry name" value="G_retro_matrix_sf"/>
</dbReference>
<dbReference type="InterPro" id="IPR039464">
    <property type="entry name" value="Gag-pol_Znf-H3C2"/>
</dbReference>
<dbReference type="InterPro" id="IPR002079">
    <property type="entry name" value="Gag_p12"/>
</dbReference>
<dbReference type="InterPro" id="IPR003036">
    <property type="entry name" value="Gag_P30"/>
</dbReference>
<dbReference type="InterPro" id="IPR001584">
    <property type="entry name" value="Integrase_cat-core"/>
</dbReference>
<dbReference type="InterPro" id="IPR040643">
    <property type="entry name" value="MLVIN_C"/>
</dbReference>
<dbReference type="InterPro" id="IPR001995">
    <property type="entry name" value="Peptidase_A2_cat"/>
</dbReference>
<dbReference type="InterPro" id="IPR021109">
    <property type="entry name" value="Peptidase_aspartic_dom_sf"/>
</dbReference>
<dbReference type="InterPro" id="IPR018061">
    <property type="entry name" value="Retropepsins"/>
</dbReference>
<dbReference type="InterPro" id="IPR008919">
    <property type="entry name" value="Retrov_capsid_N"/>
</dbReference>
<dbReference type="InterPro" id="IPR050462">
    <property type="entry name" value="Retroviral_Gag-Pol_poly"/>
</dbReference>
<dbReference type="InterPro" id="IPR010999">
    <property type="entry name" value="Retrovr_matrix"/>
</dbReference>
<dbReference type="InterPro" id="IPR043128">
    <property type="entry name" value="Rev_trsase/Diguanyl_cyclase"/>
</dbReference>
<dbReference type="InterPro" id="IPR012337">
    <property type="entry name" value="RNaseH-like_sf"/>
</dbReference>
<dbReference type="InterPro" id="IPR002156">
    <property type="entry name" value="RNaseH_domain"/>
</dbReference>
<dbReference type="InterPro" id="IPR036397">
    <property type="entry name" value="RNaseH_sf"/>
</dbReference>
<dbReference type="InterPro" id="IPR000477">
    <property type="entry name" value="RT_dom"/>
</dbReference>
<dbReference type="InterPro" id="IPR041577">
    <property type="entry name" value="RT_RNaseH_2"/>
</dbReference>
<dbReference type="InterPro" id="IPR001878">
    <property type="entry name" value="Znf_CCHC"/>
</dbReference>
<dbReference type="InterPro" id="IPR036875">
    <property type="entry name" value="Znf_CCHC_sf"/>
</dbReference>
<dbReference type="PANTHER" id="PTHR33166">
    <property type="entry name" value="GAG_P30 DOMAIN-CONTAINING PROTEIN"/>
    <property type="match status" value="1"/>
</dbReference>
<dbReference type="Pfam" id="PF01140">
    <property type="entry name" value="Gag_MA"/>
    <property type="match status" value="1"/>
</dbReference>
<dbReference type="Pfam" id="PF01141">
    <property type="entry name" value="Gag_p12"/>
    <property type="match status" value="1"/>
</dbReference>
<dbReference type="Pfam" id="PF02093">
    <property type="entry name" value="Gag_p30"/>
    <property type="match status" value="1"/>
</dbReference>
<dbReference type="Pfam" id="PF18697">
    <property type="entry name" value="MLVIN_C"/>
    <property type="match status" value="1"/>
</dbReference>
<dbReference type="Pfam" id="PF00075">
    <property type="entry name" value="RNase_H"/>
    <property type="match status" value="1"/>
</dbReference>
<dbReference type="Pfam" id="PF17919">
    <property type="entry name" value="RT_RNaseH_2"/>
    <property type="match status" value="1"/>
</dbReference>
<dbReference type="Pfam" id="PF00665">
    <property type="entry name" value="rve"/>
    <property type="match status" value="1"/>
</dbReference>
<dbReference type="Pfam" id="PF00077">
    <property type="entry name" value="RVP"/>
    <property type="match status" value="1"/>
</dbReference>
<dbReference type="Pfam" id="PF00078">
    <property type="entry name" value="RVT_1"/>
    <property type="match status" value="1"/>
</dbReference>
<dbReference type="Pfam" id="PF00098">
    <property type="entry name" value="zf-CCHC"/>
    <property type="match status" value="1"/>
</dbReference>
<dbReference type="Pfam" id="PF16721">
    <property type="entry name" value="zf-H3C2"/>
    <property type="match status" value="1"/>
</dbReference>
<dbReference type="SMART" id="SM00343">
    <property type="entry name" value="ZnF_C2HC"/>
    <property type="match status" value="1"/>
</dbReference>
<dbReference type="SUPFAM" id="SSF50630">
    <property type="entry name" value="Acid proteases"/>
    <property type="match status" value="1"/>
</dbReference>
<dbReference type="SUPFAM" id="SSF56672">
    <property type="entry name" value="DNA/RNA polymerases"/>
    <property type="match status" value="1"/>
</dbReference>
<dbReference type="SUPFAM" id="SSF47836">
    <property type="entry name" value="Retroviral matrix proteins"/>
    <property type="match status" value="1"/>
</dbReference>
<dbReference type="SUPFAM" id="SSF47943">
    <property type="entry name" value="Retrovirus capsid protein, N-terminal core domain"/>
    <property type="match status" value="1"/>
</dbReference>
<dbReference type="SUPFAM" id="SSF57756">
    <property type="entry name" value="Retrovirus zinc finger-like domains"/>
    <property type="match status" value="1"/>
</dbReference>
<dbReference type="SUPFAM" id="SSF53098">
    <property type="entry name" value="Ribonuclease H-like"/>
    <property type="match status" value="2"/>
</dbReference>
<dbReference type="PROSITE" id="PS50175">
    <property type="entry name" value="ASP_PROT_RETROV"/>
    <property type="match status" value="1"/>
</dbReference>
<dbReference type="PROSITE" id="PS00141">
    <property type="entry name" value="ASP_PROTEASE"/>
    <property type="match status" value="1"/>
</dbReference>
<dbReference type="PROSITE" id="PS50994">
    <property type="entry name" value="INTEGRASE"/>
    <property type="match status" value="1"/>
</dbReference>
<dbReference type="PROSITE" id="PS50879">
    <property type="entry name" value="RNASE_H_1"/>
    <property type="match status" value="1"/>
</dbReference>
<dbReference type="PROSITE" id="PS50878">
    <property type="entry name" value="RT_POL"/>
    <property type="match status" value="1"/>
</dbReference>
<dbReference type="PROSITE" id="PS50158">
    <property type="entry name" value="ZF_CCHC"/>
    <property type="match status" value="1"/>
</dbReference>
<organismHost>
    <name type="scientific">Mus musculus</name>
    <name type="common">Mouse</name>
    <dbReference type="NCBI Taxonomy" id="10090"/>
</organismHost>
<sequence length="1734" mass="194217">MGQTVTTPLSLTLEHWGDVQRIASNQSVEVKKRRRVTFCPAEWPTFDVGWPQDGTFNLDIILQVKSKVFSPGPHGHPDQVPYIVTWEAIAYEPPSWVKPFVSPKLSLSPTAPILPSGPSTQPPPRSALYPALTPSIKPRPSKPQVLSDNGGPLIDLLTEDPPPYGEQGPSSPDGDGDREEATYTSEIPAPSPMVSRLRGKRDPPAADSTTSRAFPLRLGGNGQLQYWPFSSSDLYNWKNNNPSFSEDPGKLTALIESVLTTHQPTWDDCQQLLGTLLTGEEKQRVLLEARKAVRGNDGRPTQLPNEVNSAFPLERPDWDYTTPEGRNHLVLYRQLLLAGLQNAGRSPTNLAKVKGITQGPNESPSAFLERLKEAYRRYTPYDPEDHGQETSVSMSFIWQSAPDIGRKLERLEDLKSKTLRDLVREAEKIFNKRETPEEREERFRRETEENEERRRAEDEQREKERDRRRQREMSKLLATVVTGQRQDRQGGERKRPQLDKDQCAYCKEKGHWAKDCPKKPRGPRGPRPQTSLLTLDDQGGQGQEPPPEPRITLKVGGQPVTFLVDTGAQHSVLTQNPGPLSDRSAWVQGATGGKRYRWTTDRKVHLATGKVTHSFLHVPDCPYPLLGRDLLTKLKAQIHFKGSGAQIVGPMGQPLQVLTLNIEDEYRLHEISTEPDVSPGSTWLSDFPQAWAETGGMGLAVRQAPLIIPLKATSTPVSIKQYPMSQEAKLGIKPHIQRLLDQGILVPCQSPWNTPLLPVKKPGTNDYRPVQGLREVNKRVEDIHPTVPNPYNLLSGLPTSHRWYTVLDLKDAFFCLRLHPTSQPLFASEWRDPGMGISGQLTWTRLPQGFKNSPTLFDEALHRGLADFRIQHPDLILLQYVDDLLLAATSELDCQQGTRALLKTLGNLGYRASAKKAQICQKQVKYLGYLLREGQRWLTEARKETVMGQPTPKTPRQLREFLGTAGFCRLWIPRFAEMAAPLYPLTKTGTLFNWGPDQQKAYHEIKQALLTAPALGLPDLTKPFELFVDEKQGYAKGVLTQKLGPWRRPVAYLSKKLDPVAAGWPPCLRMVAAIAVLTKDAGKLTMGQPLVILAPHAVEALVKQPPDRWLSNARMTHYQAMLLDTDRVQFGPVVALNPATLLPLPEEGAPHDCLEILAETHGTEPDLTDQPIPDADHTWYTDGSSFLQEGQRKAGAAVTTETEVIWARALPAGTSAQRAELIALTQALKMAEGKRLNVYTDSRYAFATAHIHGEIYKRRGLLTSEGREIKNKSEILALLKALFLPKRLSIIHCLGHQKGDSAEARGNRLADQAAREAAIKTPPDTSTLLIEDSTPYTPAYFHYTETDLKKLRELGATYNQSKGYWVFQGKPVMPDQFVFELLDSLHRLTHLGYQKMKALLDRGESPYYMLNRDKTLQYVADSCTVCAQVNASKAKIGAGVRVRGHRPGTHWEIDFTEVKPGLYGYKYLLVFVDTFSGWVEAFPTKHETAKIVTKKLLEEIFPRFGMPQVLGTDNGPAFVSQVSQSVAKLLGIDWKLHCAYRPQSSGQVERMNRTIKETLTKLTLATGTRDWVLLLPLALYRARNTPGPHGLTPYEILYGAPPPLVNFHDPEMSKFTNSPSLQAHLQALQAVQREVWKPLAAAYQDQLDQPVIPHPFRVGDTVWVRRHQTKNLEPRWKGPYTVLLTTPTALKVDGISAWIHAAHVKAATTPPIRPSWRVQRSQNPLKIRLTRGAP</sequence>
<protein>
    <recommendedName>
        <fullName>Gag-Pol polyprotein</fullName>
    </recommendedName>
    <component>
        <recommendedName>
            <fullName>Matrix protein p15</fullName>
            <shortName>MA</shortName>
        </recommendedName>
    </component>
    <component>
        <recommendedName>
            <fullName>RNA-binding phosphoprotein p12</fullName>
        </recommendedName>
        <alternativeName>
            <fullName>pp12</fullName>
        </alternativeName>
    </component>
    <component>
        <recommendedName>
            <fullName>Capsid protein p30</fullName>
            <shortName>CA</shortName>
        </recommendedName>
    </component>
    <component>
        <recommendedName>
            <fullName>Nucleocapsid protein p10-Pol</fullName>
            <shortName>NC-pol</shortName>
        </recommendedName>
    </component>
    <component>
        <recommendedName>
            <fullName>Protease</fullName>
            <ecNumber evidence="7">3.4.23.-</ecNumber>
        </recommendedName>
    </component>
    <component>
        <recommendedName>
            <fullName>Reverse transcriptase/ribonuclease H</fullName>
            <shortName>RT</shortName>
            <ecNumber evidence="8">2.7.7.49</ecNumber>
            <ecNumber evidence="8">2.7.7.7</ecNumber>
            <ecNumber evidence="9">3.1.26.4</ecNumber>
        </recommendedName>
    </component>
    <component>
        <recommendedName>
            <fullName>Integrase</fullName>
            <shortName>IN</shortName>
            <ecNumber evidence="3">2.7.7.-</ecNumber>
            <ecNumber evidence="3">3.1.-.-</ecNumber>
        </recommendedName>
    </component>
</protein>
<evidence type="ECO:0000250" key="1">
    <source>
        <dbReference type="UniProtKB" id="P03332"/>
    </source>
</evidence>
<evidence type="ECO:0000250" key="2">
    <source>
        <dbReference type="UniProtKB" id="P03336"/>
    </source>
</evidence>
<evidence type="ECO:0000250" key="3">
    <source>
        <dbReference type="UniProtKB" id="P03355"/>
    </source>
</evidence>
<evidence type="ECO:0000250" key="4">
    <source>
        <dbReference type="UniProtKB" id="P26807"/>
    </source>
</evidence>
<evidence type="ECO:0000255" key="5"/>
<evidence type="ECO:0000255" key="6">
    <source>
        <dbReference type="PROSITE-ProRule" id="PRU00047"/>
    </source>
</evidence>
<evidence type="ECO:0000255" key="7">
    <source>
        <dbReference type="PROSITE-ProRule" id="PRU00275"/>
    </source>
</evidence>
<evidence type="ECO:0000255" key="8">
    <source>
        <dbReference type="PROSITE-ProRule" id="PRU00405"/>
    </source>
</evidence>
<evidence type="ECO:0000255" key="9">
    <source>
        <dbReference type="PROSITE-ProRule" id="PRU00408"/>
    </source>
</evidence>
<evidence type="ECO:0000255" key="10">
    <source>
        <dbReference type="PROSITE-ProRule" id="PRU00457"/>
    </source>
</evidence>
<evidence type="ECO:0000256" key="11">
    <source>
        <dbReference type="SAM" id="MobiDB-lite"/>
    </source>
</evidence>
<evidence type="ECO:0000305" key="12"/>
<proteinExistence type="inferred from homology"/>
<gene>
    <name type="primary">pol</name>
</gene>
<name>POL_MLVRD</name>
<organism>
    <name type="scientific">Radiation murine leukemia virus</name>
    <dbReference type="NCBI Taxonomy" id="11787"/>
    <lineage>
        <taxon>Viruses</taxon>
        <taxon>Riboviria</taxon>
        <taxon>Pararnavirae</taxon>
        <taxon>Artverviricota</taxon>
        <taxon>Revtraviricetes</taxon>
        <taxon>Ortervirales</taxon>
        <taxon>Retroviridae</taxon>
        <taxon>Orthoretrovirinae</taxon>
        <taxon>Gammaretrovirus</taxon>
        <taxon>Murine leukemia virus</taxon>
    </lineage>
</organism>